<keyword id="KW-0175">Coiled coil</keyword>
<keyword id="KW-0403">Intermediate filament</keyword>
<sequence length="394" mass="45862">AEINLVRRRVNNLEEEVTRIKKDNLYLVNELNKARSDLDQETLNRIDFQNQLQTLLEEIDFMRRVHDQEITELQAMAARDTTPENREYFKNELSSAIRDIRAEYDQICNINRTDMESWYKLKVQEIQTQSTRQNLEQGYAKEEVKRLRVQLSELRGKLADLEGRNSLLEKQTQELNYQLEDDQRSYEAALNDRDAQIRKMREECQALMMELQMLLDTKQTLDAEIAIYRKMLEGEENRAGLRQLVEQVVKTHSLTEIGETESIRVLKGETASRTSFQRSAKGNVSIQDAASDGKYILSENTHRSKEEPIGEWRLKRKIDGKREIVYTFPTNFVLKPGKSVKIWARGQGVYSPPDQLVFDAEDSFGIGSNVQTILFNKEGEERASHIQRSSHTIN</sequence>
<proteinExistence type="evidence at transcript level"/>
<reference key="1">
    <citation type="journal article" date="1994" name="Parasitol. Res.">
        <title>Onchocerca volvulus and Acanthocheilonema viteae: cloning of cDNAs for muscle-cell intermediate filaments.</title>
        <authorList>
            <person name="Seeber F."/>
            <person name="Hoefle W."/>
            <person name="Kern A."/>
            <person name="Lucius R."/>
        </authorList>
    </citation>
    <scope>NUCLEOTIDE SEQUENCE [MRNA]</scope>
    <source>
        <tissue>Muscle</tissue>
    </source>
</reference>
<evidence type="ECO:0000255" key="1">
    <source>
        <dbReference type="PROSITE-ProRule" id="PRU01187"/>
    </source>
</evidence>
<evidence type="ECO:0000255" key="2">
    <source>
        <dbReference type="PROSITE-ProRule" id="PRU01188"/>
    </source>
</evidence>
<name>AV71_ACAVI</name>
<gene>
    <name type="primary">AV71</name>
</gene>
<accession>Q17107</accession>
<protein>
    <recommendedName>
        <fullName>Muscle cell intermediate filament protein AV71</fullName>
    </recommendedName>
</protein>
<feature type="chain" id="PRO_0000063858" description="Muscle cell intermediate filament protein AV71">
    <location>
        <begin position="1" status="less than"/>
        <end position="394"/>
    </location>
</feature>
<feature type="domain" description="IF rod" evidence="2">
    <location>
        <begin position="1" status="less than"/>
        <end position="239"/>
    </location>
</feature>
<feature type="domain" description="LTD" evidence="1">
    <location>
        <begin position="272"/>
        <end position="389"/>
    </location>
</feature>
<feature type="region of interest" description="Coil 1B">
    <location>
        <begin position="1" status="less than"/>
        <end position="73"/>
    </location>
</feature>
<feature type="region of interest" description="Linker 12">
    <location>
        <begin position="74"/>
        <end position="91"/>
    </location>
</feature>
<feature type="region of interest" description="Coil 2">
    <location>
        <begin position="92"/>
        <end position="239"/>
    </location>
</feature>
<feature type="region of interest" description="Tail">
    <location>
        <begin position="240"/>
        <end position="394"/>
    </location>
</feature>
<feature type="non-terminal residue">
    <location>
        <position position="1"/>
    </location>
</feature>
<dbReference type="EMBL" id="X68557">
    <property type="protein sequence ID" value="CAA48560.1"/>
    <property type="molecule type" value="mRNA"/>
</dbReference>
<dbReference type="PIR" id="S26431">
    <property type="entry name" value="S26431"/>
</dbReference>
<dbReference type="SMR" id="Q17107"/>
<dbReference type="GO" id="GO:0005882">
    <property type="term" value="C:intermediate filament"/>
    <property type="evidence" value="ECO:0007669"/>
    <property type="project" value="UniProtKB-KW"/>
</dbReference>
<dbReference type="GO" id="GO:0005635">
    <property type="term" value="C:nuclear envelope"/>
    <property type="evidence" value="ECO:0007669"/>
    <property type="project" value="TreeGrafter"/>
</dbReference>
<dbReference type="GO" id="GO:0005652">
    <property type="term" value="C:nuclear lamina"/>
    <property type="evidence" value="ECO:0007669"/>
    <property type="project" value="TreeGrafter"/>
</dbReference>
<dbReference type="GO" id="GO:0005200">
    <property type="term" value="F:structural constituent of cytoskeleton"/>
    <property type="evidence" value="ECO:0007669"/>
    <property type="project" value="TreeGrafter"/>
</dbReference>
<dbReference type="GO" id="GO:0031507">
    <property type="term" value="P:heterochromatin formation"/>
    <property type="evidence" value="ECO:0007669"/>
    <property type="project" value="TreeGrafter"/>
</dbReference>
<dbReference type="GO" id="GO:0006998">
    <property type="term" value="P:nuclear envelope organization"/>
    <property type="evidence" value="ECO:0007669"/>
    <property type="project" value="TreeGrafter"/>
</dbReference>
<dbReference type="GO" id="GO:0007097">
    <property type="term" value="P:nuclear migration"/>
    <property type="evidence" value="ECO:0007669"/>
    <property type="project" value="TreeGrafter"/>
</dbReference>
<dbReference type="GO" id="GO:0051664">
    <property type="term" value="P:nuclear pore localization"/>
    <property type="evidence" value="ECO:0007669"/>
    <property type="project" value="TreeGrafter"/>
</dbReference>
<dbReference type="GO" id="GO:0090435">
    <property type="term" value="P:protein localization to nuclear envelope"/>
    <property type="evidence" value="ECO:0007669"/>
    <property type="project" value="TreeGrafter"/>
</dbReference>
<dbReference type="FunFam" id="2.60.40.1260:FF:000003">
    <property type="entry name" value="Intermediate filament protein A"/>
    <property type="match status" value="1"/>
</dbReference>
<dbReference type="FunFam" id="1.20.5.170:FF:000058">
    <property type="entry name" value="Intermediate filament protein B"/>
    <property type="match status" value="1"/>
</dbReference>
<dbReference type="FunFam" id="1.20.5.500:FF:000001">
    <property type="entry name" value="Type II keratin 23"/>
    <property type="match status" value="1"/>
</dbReference>
<dbReference type="Gene3D" id="1.20.5.170">
    <property type="match status" value="1"/>
</dbReference>
<dbReference type="Gene3D" id="2.60.40.1260">
    <property type="entry name" value="Lamin Tail domain"/>
    <property type="match status" value="1"/>
</dbReference>
<dbReference type="Gene3D" id="1.20.5.500">
    <property type="entry name" value="Single helix bin"/>
    <property type="match status" value="1"/>
</dbReference>
<dbReference type="Gene3D" id="1.20.5.1160">
    <property type="entry name" value="Vasodilator-stimulated phosphoprotein"/>
    <property type="match status" value="1"/>
</dbReference>
<dbReference type="InterPro" id="IPR018039">
    <property type="entry name" value="IF_conserved"/>
</dbReference>
<dbReference type="InterPro" id="IPR039008">
    <property type="entry name" value="IF_rod_dom"/>
</dbReference>
<dbReference type="InterPro" id="IPR001322">
    <property type="entry name" value="Lamin_tail_dom"/>
</dbReference>
<dbReference type="InterPro" id="IPR036415">
    <property type="entry name" value="Lamin_tail_dom_sf"/>
</dbReference>
<dbReference type="PANTHER" id="PTHR45721:SF12">
    <property type="entry name" value="INTERMEDIATE FILAMENT PROTEIN IFA-1"/>
    <property type="match status" value="1"/>
</dbReference>
<dbReference type="PANTHER" id="PTHR45721">
    <property type="entry name" value="LAMIN DM0-RELATED"/>
    <property type="match status" value="1"/>
</dbReference>
<dbReference type="Pfam" id="PF00038">
    <property type="entry name" value="Filament"/>
    <property type="match status" value="1"/>
</dbReference>
<dbReference type="SMART" id="SM01391">
    <property type="entry name" value="Filament"/>
    <property type="match status" value="1"/>
</dbReference>
<dbReference type="SUPFAM" id="SSF64593">
    <property type="entry name" value="Intermediate filament protein, coiled coil region"/>
    <property type="match status" value="1"/>
</dbReference>
<dbReference type="SUPFAM" id="SSF74853">
    <property type="entry name" value="Lamin A/C globular tail domain"/>
    <property type="match status" value="1"/>
</dbReference>
<dbReference type="PROSITE" id="PS00226">
    <property type="entry name" value="IF_ROD_1"/>
    <property type="match status" value="1"/>
</dbReference>
<dbReference type="PROSITE" id="PS51842">
    <property type="entry name" value="IF_ROD_2"/>
    <property type="match status" value="1"/>
</dbReference>
<dbReference type="PROSITE" id="PS51841">
    <property type="entry name" value="LTD"/>
    <property type="match status" value="1"/>
</dbReference>
<comment type="similarity">
    <text evidence="2">Belongs to the intermediate filament family.</text>
</comment>
<organism>
    <name type="scientific">Acanthocheilonema viteae</name>
    <name type="common">Filarial nematode worm</name>
    <name type="synonym">Dipetalonema viteae</name>
    <dbReference type="NCBI Taxonomy" id="6277"/>
    <lineage>
        <taxon>Eukaryota</taxon>
        <taxon>Metazoa</taxon>
        <taxon>Ecdysozoa</taxon>
        <taxon>Nematoda</taxon>
        <taxon>Chromadorea</taxon>
        <taxon>Rhabditida</taxon>
        <taxon>Spirurina</taxon>
        <taxon>Spiruromorpha</taxon>
        <taxon>Filarioidea</taxon>
        <taxon>Onchocercidae</taxon>
        <taxon>Acanthocheilonema</taxon>
    </lineage>
</organism>